<evidence type="ECO:0000250" key="1">
    <source>
        <dbReference type="UniProtKB" id="Q8K4L6"/>
    </source>
</evidence>
<evidence type="ECO:0000255" key="2"/>
<evidence type="ECO:0000256" key="3">
    <source>
        <dbReference type="SAM" id="MobiDB-lite"/>
    </source>
</evidence>
<evidence type="ECO:0000269" key="4">
    <source>
    </source>
</evidence>
<evidence type="ECO:0000269" key="5">
    <source>
    </source>
</evidence>
<evidence type="ECO:0000269" key="6">
    <source>
    </source>
</evidence>
<evidence type="ECO:0000269" key="7">
    <source>
    </source>
</evidence>
<evidence type="ECO:0000269" key="8">
    <source>
    </source>
</evidence>
<evidence type="ECO:0000269" key="9">
    <source>
    </source>
</evidence>
<evidence type="ECO:0000269" key="10">
    <source>
    </source>
</evidence>
<evidence type="ECO:0000269" key="11">
    <source>
    </source>
</evidence>
<evidence type="ECO:0000269" key="12">
    <source>
    </source>
</evidence>
<evidence type="ECO:0000269" key="13">
    <source>
    </source>
</evidence>
<evidence type="ECO:0000269" key="14">
    <source>
    </source>
</evidence>
<evidence type="ECO:0000269" key="15">
    <source>
    </source>
</evidence>
<evidence type="ECO:0000269" key="16">
    <source>
    </source>
</evidence>
<evidence type="ECO:0000269" key="17">
    <source>
    </source>
</evidence>
<evidence type="ECO:0000269" key="18">
    <source>
    </source>
</evidence>
<evidence type="ECO:0000269" key="19">
    <source>
    </source>
</evidence>
<evidence type="ECO:0000269" key="20">
    <source>
    </source>
</evidence>
<evidence type="ECO:0000269" key="21">
    <source>
    </source>
</evidence>
<evidence type="ECO:0000269" key="22">
    <source>
    </source>
</evidence>
<evidence type="ECO:0000269" key="23">
    <source>
    </source>
</evidence>
<evidence type="ECO:0000303" key="24">
    <source>
    </source>
</evidence>
<evidence type="ECO:0000303" key="25">
    <source>
    </source>
</evidence>
<evidence type="ECO:0000303" key="26">
    <source ref="5"/>
</evidence>
<evidence type="ECO:0000305" key="27"/>
<evidence type="ECO:0000305" key="28">
    <source>
    </source>
</evidence>
<evidence type="ECO:0000305" key="29">
    <source>
    </source>
</evidence>
<evidence type="ECO:0000305" key="30">
    <source>
    </source>
</evidence>
<gene>
    <name type="primary">MEPE</name>
</gene>
<keyword id="KW-0025">Alternative splicing</keyword>
<keyword id="KW-0091">Biomineralization</keyword>
<keyword id="KW-0272">Extracellular matrix</keyword>
<keyword id="KW-0325">Glycoprotein</keyword>
<keyword id="KW-0597">Phosphoprotein</keyword>
<keyword id="KW-0654">Proteoglycan</keyword>
<keyword id="KW-1267">Proteomics identification</keyword>
<keyword id="KW-1185">Reference proteome</keyword>
<keyword id="KW-0964">Secreted</keyword>
<keyword id="KW-0732">Signal</keyword>
<protein>
    <recommendedName>
        <fullName evidence="24">Matrix extracellular phosphoglycoprotein</fullName>
    </recommendedName>
    <alternativeName>
        <fullName evidence="1">Osteoblast/osteocyte factor 45</fullName>
        <shortName evidence="1">OF45</shortName>
    </alternativeName>
    <alternativeName>
        <fullName evidence="25">Osteoregulin</fullName>
    </alternativeName>
</protein>
<name>MEPE_HUMAN</name>
<organism>
    <name type="scientific">Homo sapiens</name>
    <name type="common">Human</name>
    <dbReference type="NCBI Taxonomy" id="9606"/>
    <lineage>
        <taxon>Eukaryota</taxon>
        <taxon>Metazoa</taxon>
        <taxon>Chordata</taxon>
        <taxon>Craniata</taxon>
        <taxon>Vertebrata</taxon>
        <taxon>Euteleostomi</taxon>
        <taxon>Mammalia</taxon>
        <taxon>Eutheria</taxon>
        <taxon>Euarchontoglires</taxon>
        <taxon>Primates</taxon>
        <taxon>Haplorrhini</taxon>
        <taxon>Catarrhini</taxon>
        <taxon>Hominidae</taxon>
        <taxon>Homo</taxon>
    </lineage>
</organism>
<feature type="signal peptide" evidence="2">
    <location>
        <begin position="1"/>
        <end position="17"/>
    </location>
</feature>
<feature type="chain" id="PRO_0000021668" description="Matrix extracellular phosphoglycoprotein">
    <location>
        <begin position="18"/>
        <end position="525"/>
    </location>
</feature>
<feature type="region of interest" description="Disordered" evidence="3">
    <location>
        <begin position="24"/>
        <end position="95"/>
    </location>
</feature>
<feature type="region of interest" description="Disordered" evidence="3">
    <location>
        <begin position="187"/>
        <end position="216"/>
    </location>
</feature>
<feature type="region of interest" description="Disordered" evidence="3">
    <location>
        <begin position="237"/>
        <end position="525"/>
    </location>
</feature>
<feature type="region of interest" description="Dentonin" evidence="28 29">
    <location>
        <begin position="242"/>
        <end position="264"/>
    </location>
</feature>
<feature type="region of interest" description="ASARM motif; interaction with PHEX" evidence="30">
    <location>
        <begin position="507"/>
        <end position="525"/>
    </location>
</feature>
<feature type="short sequence motif" description="Cell attachment site" evidence="2">
    <location>
        <begin position="247"/>
        <end position="249"/>
    </location>
</feature>
<feature type="compositionally biased region" description="Basic and acidic residues" evidence="3">
    <location>
        <begin position="25"/>
        <end position="46"/>
    </location>
</feature>
<feature type="compositionally biased region" description="Basic and acidic residues" evidence="3">
    <location>
        <begin position="64"/>
        <end position="73"/>
    </location>
</feature>
<feature type="compositionally biased region" description="Polar residues" evidence="3">
    <location>
        <begin position="75"/>
        <end position="95"/>
    </location>
</feature>
<feature type="compositionally biased region" description="Polar residues" evidence="3">
    <location>
        <begin position="200"/>
        <end position="210"/>
    </location>
</feature>
<feature type="compositionally biased region" description="Basic and acidic residues" evidence="3">
    <location>
        <begin position="292"/>
        <end position="312"/>
    </location>
</feature>
<feature type="compositionally biased region" description="Basic and acidic residues" evidence="3">
    <location>
        <begin position="319"/>
        <end position="328"/>
    </location>
</feature>
<feature type="compositionally biased region" description="Low complexity" evidence="3">
    <location>
        <begin position="513"/>
        <end position="525"/>
    </location>
</feature>
<feature type="glycosylation site" description="O-linked (Xyl...) (chondroitin sulfate) serine" evidence="23">
    <location>
        <position position="256"/>
    </location>
</feature>
<feature type="glycosylation site" description="N-linked (GlcNAc...) asparagine" evidence="2">
    <location>
        <position position="477"/>
    </location>
</feature>
<feature type="glycosylation site" description="N-linked (GlcNAc...) asparagine" evidence="2">
    <location>
        <position position="478"/>
    </location>
</feature>
<feature type="splice variant" id="VSP_046892" description="In isoform 3." evidence="27">
    <location>
        <begin position="1"/>
        <end position="113"/>
    </location>
</feature>
<feature type="splice variant" id="VSP_043986" description="In isoform 2." evidence="26">
    <original>R</original>
    <variation>RITYKGHYEKHGHYVFKCVYMSPEKKNQTDVK</variation>
    <location>
        <position position="36"/>
    </location>
</feature>
<feature type="sequence variant" id="VAR_034094" description="In dbSNP:rs17013285.">
    <original>V</original>
    <variation>I</variation>
    <location>
        <position position="330"/>
    </location>
</feature>
<accession>Q9NQ76</accession>
<accession>A1A4X9</accession>
<accession>A8MTA3</accession>
<accession>D2CFR4</accession>
<accession>F5H5C5</accession>
<comment type="function">
    <text evidence="1 8 14 17 18 20 22">Promotes renal phosphate excretion and inhibits intestinal phosphate absorption (PubMed:14962809, PubMed:19005008). Promotes bone mineralization by osteoblasts and cartilage mineralization by chondrocytes (PubMed:18162525, PubMed:19998030, PubMed:22766095). Regulates the mineralization of the extracellular matrix of the craniofacial complex, such as teeth, bone and cartilage (By similarity). Promotes dental pulp stem cell proliferation and differentiation (PubMed:22341070).</text>
</comment>
<comment type="subunit">
    <text evidence="13 14">Interacts (via the ASARM motif) with PHEX; the interaction is zinc-dependent.</text>
</comment>
<comment type="interaction">
    <interactant intactId="EBI-1753293">
        <id>Q9NQ76</id>
    </interactant>
    <interactant intactId="EBI-389883">
        <id>P16333</id>
        <label>NCK1</label>
    </interactant>
    <organismsDiffer>false</organismsDiffer>
    <experiments>3</experiments>
</comment>
<comment type="interaction">
    <interactant intactId="EBI-1753293">
        <id>Q9NQ76</id>
    </interactant>
    <interactant intactId="EBI-2827676">
        <id>P78562</id>
        <label>PHEX</label>
    </interactant>
    <organismsDiffer>false</organismsDiffer>
    <experiments>2</experiments>
</comment>
<comment type="interaction">
    <interactant intactId="EBI-1753293">
        <id>Q9NQ76</id>
    </interactant>
    <interactant intactId="EBI-1538838">
        <id>Q2QGD7</id>
        <label>ZXDC</label>
    </interactant>
    <organismsDiffer>false</organismsDiffer>
    <experiments>3</experiments>
</comment>
<comment type="subcellular location">
    <subcellularLocation>
        <location evidence="5 10">Secreted</location>
        <location evidence="5 10">Extracellular space</location>
        <location evidence="5 10">Extracellular matrix</location>
    </subcellularLocation>
    <subcellularLocation>
        <location evidence="23">Secreted</location>
    </subcellularLocation>
</comment>
<comment type="alternative products">
    <event type="alternative splicing"/>
    <isoform>
        <id>Q9NQ76-1</id>
        <name>1</name>
        <sequence type="displayed"/>
    </isoform>
    <isoform>
        <id>Q9NQ76-2</id>
        <name>2</name>
        <sequence type="described" ref="VSP_043986"/>
    </isoform>
    <isoform>
        <id>Q9NQ76-3</id>
        <name>3</name>
        <sequence type="described" ref="VSP_046892"/>
    </isoform>
</comment>
<comment type="tissue specificity">
    <text evidence="4 5 7 10 11 12 15 19 20 23">Detected in urine (at protein level) (PubMed:37453717). Expressed by osteoblasts (PubMed:10945470, PubMed:11414762, PubMed:15108058). Expressed by stem cells in dental pulp (PubMed:15153459). Expressed by mesenchymal cells in dental papilla and dental pulp (PubMed:18547474, PubMed:22341070). Expressed in teeth, specifically in decidious dentin (PubMed:20581062). Expressed in ondotoblasts (PubMed:12489176). Expressed in salivary glands (PubMed:15329369). Secreted from oncogenic hypophosphatemic tumors (PubMed:11414762).</text>
</comment>
<comment type="domain">
    <text evidence="13 14 16 18 19 22">The acidic serine aspartate-rich MEPE-associated (ASARM) motif is sufficient when phosphorylated to inhibit bone mineralization by osteoblasts and cartilage mineralization by chondrocytes by binding hydroxyapatite crystals during the mineralization stage (PubMed:15664000, PubMed:18162525, PubMed:18597632, PubMed:19998030, PubMed:22766095). It can also inhibit dentin mineralization (PubMed:20581062).</text>
</comment>
<comment type="domain">
    <text evidence="9 11">The dentonin region is sufficient to promote dental pulp stem cell proliferation (PubMed:15153459). It can also stimulate bone formation, osteoblast differentiation, and activate integrin signaling pathways (PubMed:15040834).</text>
</comment>
<comment type="PTM">
    <text evidence="18 21">Phosphorylated on serine residues in the ASARM motif (in vitro) by FAM20C; the phosphorylation is important for the inhibition of bone mineralization (PubMed:19998030, PubMed:22582013).</text>
</comment>
<comment type="PTM">
    <text evidence="6">Cleaved by CTSB/cathepsin B; the cleavage is blocked by metalloprotease PHEX.</text>
</comment>
<comment type="similarity">
    <text evidence="27">Belongs to the PF07175/osteoregulin family.</text>
</comment>
<dbReference type="EMBL" id="AJ276396">
    <property type="protein sequence ID" value="CAB97250.1"/>
    <property type="molecule type" value="mRNA"/>
</dbReference>
<dbReference type="EMBL" id="AF325916">
    <property type="protein sequence ID" value="AAK70343.1"/>
    <property type="molecule type" value="mRNA"/>
</dbReference>
<dbReference type="EMBL" id="AC093768">
    <property type="status" value="NOT_ANNOTATED_CDS"/>
    <property type="molecule type" value="Genomic_DNA"/>
</dbReference>
<dbReference type="EMBL" id="CH471057">
    <property type="protein sequence ID" value="EAX06001.1"/>
    <property type="molecule type" value="Genomic_DNA"/>
</dbReference>
<dbReference type="EMBL" id="CH471057">
    <property type="protein sequence ID" value="EAX06002.1"/>
    <property type="molecule type" value="Genomic_DNA"/>
</dbReference>
<dbReference type="EMBL" id="BC128158">
    <property type="protein sequence ID" value="AAI28159.1"/>
    <property type="molecule type" value="mRNA"/>
</dbReference>
<dbReference type="EMBL" id="DQ854717">
    <property type="protein sequence ID" value="ABI64294.1"/>
    <property type="molecule type" value="mRNA"/>
</dbReference>
<dbReference type="CCDS" id="CCDS3625.1">
    <molecule id="Q9NQ76-1"/>
</dbReference>
<dbReference type="CCDS" id="CCDS77940.1">
    <molecule id="Q9NQ76-2"/>
</dbReference>
<dbReference type="RefSeq" id="NP_001171623.1">
    <molecule id="Q9NQ76-1"/>
    <property type="nucleotide sequence ID" value="NM_001184694.3"/>
</dbReference>
<dbReference type="RefSeq" id="NP_001171624.1">
    <molecule id="Q9NQ76-3"/>
    <property type="nucleotide sequence ID" value="NM_001184695.4"/>
</dbReference>
<dbReference type="RefSeq" id="NP_001171625.1">
    <molecule id="Q9NQ76-3"/>
    <property type="nucleotide sequence ID" value="NM_001184696.2"/>
</dbReference>
<dbReference type="RefSeq" id="NP_001171626.1">
    <molecule id="Q9NQ76-3"/>
    <property type="nucleotide sequence ID" value="NM_001184697.2"/>
</dbReference>
<dbReference type="RefSeq" id="NP_001278112.1">
    <molecule id="Q9NQ76-2"/>
    <property type="nucleotide sequence ID" value="NM_001291183.2"/>
</dbReference>
<dbReference type="RefSeq" id="NP_064588.1">
    <molecule id="Q9NQ76-1"/>
    <property type="nucleotide sequence ID" value="NM_020203.6"/>
</dbReference>
<dbReference type="RefSeq" id="XP_006714341.1">
    <property type="nucleotide sequence ID" value="XM_006714278.2"/>
</dbReference>
<dbReference type="BioGRID" id="121279">
    <property type="interactions" value="47"/>
</dbReference>
<dbReference type="FunCoup" id="Q9NQ76">
    <property type="interactions" value="105"/>
</dbReference>
<dbReference type="IntAct" id="Q9NQ76">
    <property type="interactions" value="15"/>
</dbReference>
<dbReference type="STRING" id="9606.ENSP00000378534"/>
<dbReference type="GlyCosmos" id="Q9NQ76">
    <property type="glycosylation" value="2 sites, No reported glycans"/>
</dbReference>
<dbReference type="GlyGen" id="Q9NQ76">
    <property type="glycosylation" value="4 sites, 1 O-linked glycan (1 site)"/>
</dbReference>
<dbReference type="iPTMnet" id="Q9NQ76"/>
<dbReference type="PhosphoSitePlus" id="Q9NQ76"/>
<dbReference type="BioMuta" id="MEPE"/>
<dbReference type="DMDM" id="33112396"/>
<dbReference type="jPOST" id="Q9NQ76"/>
<dbReference type="MassIVE" id="Q9NQ76"/>
<dbReference type="PaxDb" id="9606-ENSP00000416984"/>
<dbReference type="PeptideAtlas" id="Q9NQ76"/>
<dbReference type="ProteomicsDB" id="26838"/>
<dbReference type="ProteomicsDB" id="82096">
    <molecule id="Q9NQ76-1"/>
</dbReference>
<dbReference type="ProteomicsDB" id="82097">
    <molecule id="Q9NQ76-2"/>
</dbReference>
<dbReference type="Antibodypedia" id="44860">
    <property type="antibodies" value="175 antibodies from 28 providers"/>
</dbReference>
<dbReference type="DNASU" id="56955"/>
<dbReference type="Ensembl" id="ENST00000361056.4">
    <molecule id="Q9NQ76-1"/>
    <property type="protein sequence ID" value="ENSP00000354341.3"/>
    <property type="gene ID" value="ENSG00000152595.17"/>
</dbReference>
<dbReference type="Ensembl" id="ENST00000395102.8">
    <molecule id="Q9NQ76-2"/>
    <property type="protein sequence ID" value="ENSP00000378534.4"/>
    <property type="gene ID" value="ENSG00000152595.17"/>
</dbReference>
<dbReference type="Ensembl" id="ENST00000424957.8">
    <molecule id="Q9NQ76-1"/>
    <property type="protein sequence ID" value="ENSP00000416984.3"/>
    <property type="gene ID" value="ENSG00000152595.17"/>
</dbReference>
<dbReference type="GeneID" id="56955"/>
<dbReference type="KEGG" id="hsa:56955"/>
<dbReference type="MANE-Select" id="ENST00000361056.4">
    <property type="protein sequence ID" value="ENSP00000354341.3"/>
    <property type="RefSeq nucleotide sequence ID" value="NM_020203.6"/>
    <property type="RefSeq protein sequence ID" value="NP_064588.1"/>
</dbReference>
<dbReference type="UCSC" id="uc003hqy.4">
    <molecule id="Q9NQ76-1"/>
    <property type="organism name" value="human"/>
</dbReference>
<dbReference type="AGR" id="HGNC:13361"/>
<dbReference type="CTD" id="56955"/>
<dbReference type="DisGeNET" id="56955"/>
<dbReference type="GeneCards" id="MEPE"/>
<dbReference type="HGNC" id="HGNC:13361">
    <property type="gene designation" value="MEPE"/>
</dbReference>
<dbReference type="HPA" id="ENSG00000152595">
    <property type="expression patterns" value="Tissue enriched (brain)"/>
</dbReference>
<dbReference type="MalaCards" id="MEPE"/>
<dbReference type="MIM" id="605912">
    <property type="type" value="gene"/>
</dbReference>
<dbReference type="neXtProt" id="NX_Q9NQ76"/>
<dbReference type="OpenTargets" id="ENSG00000152595"/>
<dbReference type="PharmGKB" id="PA30755"/>
<dbReference type="VEuPathDB" id="HostDB:ENSG00000152595"/>
<dbReference type="eggNOG" id="ENOG502SW2S">
    <property type="taxonomic scope" value="Eukaryota"/>
</dbReference>
<dbReference type="GeneTree" id="ENSGT00390000010702"/>
<dbReference type="HOGENOM" id="CLU_039303_0_0_1"/>
<dbReference type="InParanoid" id="Q9NQ76"/>
<dbReference type="OMA" id="PGRKNQT"/>
<dbReference type="OrthoDB" id="9041543at2759"/>
<dbReference type="PAN-GO" id="Q9NQ76">
    <property type="GO annotations" value="3 GO annotations based on evolutionary models"/>
</dbReference>
<dbReference type="PhylomeDB" id="Q9NQ76"/>
<dbReference type="TreeFam" id="TF338655"/>
<dbReference type="PathwayCommons" id="Q9NQ76"/>
<dbReference type="Reactome" id="R-HSA-381426">
    <property type="pathway name" value="Regulation of Insulin-like Growth Factor (IGF) transport and uptake by Insulin-like Growth Factor Binding Proteins (IGFBPs)"/>
</dbReference>
<dbReference type="Reactome" id="R-HSA-8957275">
    <property type="pathway name" value="Post-translational protein phosphorylation"/>
</dbReference>
<dbReference type="SignaLink" id="Q9NQ76"/>
<dbReference type="BioGRID-ORCS" id="56955">
    <property type="hits" value="22 hits in 1134 CRISPR screens"/>
</dbReference>
<dbReference type="GeneWiki" id="MEPE"/>
<dbReference type="GenomeRNAi" id="56955"/>
<dbReference type="Pharos" id="Q9NQ76">
    <property type="development level" value="Tbio"/>
</dbReference>
<dbReference type="PRO" id="PR:Q9NQ76"/>
<dbReference type="Proteomes" id="UP000005640">
    <property type="component" value="Chromosome 4"/>
</dbReference>
<dbReference type="RNAct" id="Q9NQ76">
    <property type="molecule type" value="protein"/>
</dbReference>
<dbReference type="Bgee" id="ENSG00000152595">
    <property type="expression patterns" value="Expressed in tibia and 43 other cell types or tissues"/>
</dbReference>
<dbReference type="ExpressionAtlas" id="Q9NQ76">
    <property type="expression patterns" value="baseline and differential"/>
</dbReference>
<dbReference type="GO" id="GO:0005788">
    <property type="term" value="C:endoplasmic reticulum lumen"/>
    <property type="evidence" value="ECO:0000304"/>
    <property type="project" value="Reactome"/>
</dbReference>
<dbReference type="GO" id="GO:0031012">
    <property type="term" value="C:extracellular matrix"/>
    <property type="evidence" value="ECO:0000318"/>
    <property type="project" value="GO_Central"/>
</dbReference>
<dbReference type="GO" id="GO:0005576">
    <property type="term" value="C:extracellular region"/>
    <property type="evidence" value="ECO:0007669"/>
    <property type="project" value="UniProtKB-SubCell"/>
</dbReference>
<dbReference type="GO" id="GO:1990430">
    <property type="term" value="F:extracellular matrix protein binding"/>
    <property type="evidence" value="ECO:0000318"/>
    <property type="project" value="GO_Central"/>
</dbReference>
<dbReference type="GO" id="GO:0005201">
    <property type="term" value="F:extracellular matrix structural constituent"/>
    <property type="evidence" value="ECO:0000304"/>
    <property type="project" value="ProtInc"/>
</dbReference>
<dbReference type="GO" id="GO:0031214">
    <property type="term" value="P:biomineral tissue development"/>
    <property type="evidence" value="ECO:0000318"/>
    <property type="project" value="GO_Central"/>
</dbReference>
<dbReference type="GO" id="GO:0001501">
    <property type="term" value="P:skeletal system development"/>
    <property type="evidence" value="ECO:0000304"/>
    <property type="project" value="ProtInc"/>
</dbReference>
<dbReference type="InterPro" id="IPR009837">
    <property type="entry name" value="MEPE"/>
</dbReference>
<dbReference type="PANTHER" id="PTHR16510">
    <property type="entry name" value="EXTRACELLULAR MATRIX PHOSPHOGLYCOPROTEIN WITH ASARM MOTIF"/>
    <property type="match status" value="1"/>
</dbReference>
<dbReference type="PANTHER" id="PTHR16510:SF4">
    <property type="entry name" value="MATRIX EXTRACELLULAR PHOSPHOGLYCOPROTEIN"/>
    <property type="match status" value="1"/>
</dbReference>
<dbReference type="Pfam" id="PF07175">
    <property type="entry name" value="Osteoregulin"/>
    <property type="match status" value="1"/>
</dbReference>
<reference key="1">
    <citation type="journal article" date="2000" name="Genomics">
        <title>MEPE, a new gene expressed in bone marrow and tumors causing osteomalacia.</title>
        <authorList>
            <person name="Rowe P.S.N."/>
            <person name="de Zoysa P.A."/>
            <person name="Dong R."/>
            <person name="Wang H.R."/>
            <person name="White K.E."/>
            <person name="Econs M.J."/>
            <person name="Oudet C.L."/>
        </authorList>
    </citation>
    <scope>NUCLEOTIDE SEQUENCE [MRNA] (ISOFORM 1)</scope>
    <scope>TISSUE SPECIFICITY</scope>
    <source>
        <tissue>Bone</tissue>
    </source>
</reference>
<reference key="2">
    <citation type="journal article" date="2001" name="Genomics">
        <title>Mepe, the gene encoding a tumor-secreted protein in oncogenic hypophosphatemic osteomalacia, is expressed in bone.</title>
        <authorList>
            <person name="Argiro L."/>
            <person name="Desbarats M."/>
            <person name="Glorieux F.H."/>
            <person name="Ecarot B."/>
        </authorList>
    </citation>
    <scope>NUCLEOTIDE SEQUENCE [MRNA] (ISOFORM 1)</scope>
    <scope>SUBCELLULAR LOCATION</scope>
    <scope>TISSUE SPECIFICITY</scope>
    <source>
        <tissue>Bone</tissue>
    </source>
</reference>
<reference key="3">
    <citation type="journal article" date="2005" name="Nature">
        <title>Generation and annotation of the DNA sequences of human chromosomes 2 and 4.</title>
        <authorList>
            <person name="Hillier L.W."/>
            <person name="Graves T.A."/>
            <person name="Fulton R.S."/>
            <person name="Fulton L.A."/>
            <person name="Pepin K.H."/>
            <person name="Minx P."/>
            <person name="Wagner-McPherson C."/>
            <person name="Layman D."/>
            <person name="Wylie K."/>
            <person name="Sekhon M."/>
            <person name="Becker M.C."/>
            <person name="Fewell G.A."/>
            <person name="Delehaunty K.D."/>
            <person name="Miner T.L."/>
            <person name="Nash W.E."/>
            <person name="Kremitzki C."/>
            <person name="Oddy L."/>
            <person name="Du H."/>
            <person name="Sun H."/>
            <person name="Bradshaw-Cordum H."/>
            <person name="Ali J."/>
            <person name="Carter J."/>
            <person name="Cordes M."/>
            <person name="Harris A."/>
            <person name="Isak A."/>
            <person name="van Brunt A."/>
            <person name="Nguyen C."/>
            <person name="Du F."/>
            <person name="Courtney L."/>
            <person name="Kalicki J."/>
            <person name="Ozersky P."/>
            <person name="Abbott S."/>
            <person name="Armstrong J."/>
            <person name="Belter E.A."/>
            <person name="Caruso L."/>
            <person name="Cedroni M."/>
            <person name="Cotton M."/>
            <person name="Davidson T."/>
            <person name="Desai A."/>
            <person name="Elliott G."/>
            <person name="Erb T."/>
            <person name="Fronick C."/>
            <person name="Gaige T."/>
            <person name="Haakenson W."/>
            <person name="Haglund K."/>
            <person name="Holmes A."/>
            <person name="Harkins R."/>
            <person name="Kim K."/>
            <person name="Kruchowski S.S."/>
            <person name="Strong C.M."/>
            <person name="Grewal N."/>
            <person name="Goyea E."/>
            <person name="Hou S."/>
            <person name="Levy A."/>
            <person name="Martinka S."/>
            <person name="Mead K."/>
            <person name="McLellan M.D."/>
            <person name="Meyer R."/>
            <person name="Randall-Maher J."/>
            <person name="Tomlinson C."/>
            <person name="Dauphin-Kohlberg S."/>
            <person name="Kozlowicz-Reilly A."/>
            <person name="Shah N."/>
            <person name="Swearengen-Shahid S."/>
            <person name="Snider J."/>
            <person name="Strong J.T."/>
            <person name="Thompson J."/>
            <person name="Yoakum M."/>
            <person name="Leonard S."/>
            <person name="Pearman C."/>
            <person name="Trani L."/>
            <person name="Radionenko M."/>
            <person name="Waligorski J.E."/>
            <person name="Wang C."/>
            <person name="Rock S.M."/>
            <person name="Tin-Wollam A.-M."/>
            <person name="Maupin R."/>
            <person name="Latreille P."/>
            <person name="Wendl M.C."/>
            <person name="Yang S.-P."/>
            <person name="Pohl C."/>
            <person name="Wallis J.W."/>
            <person name="Spieth J."/>
            <person name="Bieri T.A."/>
            <person name="Berkowicz N."/>
            <person name="Nelson J.O."/>
            <person name="Osborne J."/>
            <person name="Ding L."/>
            <person name="Meyer R."/>
            <person name="Sabo A."/>
            <person name="Shotland Y."/>
            <person name="Sinha P."/>
            <person name="Wohldmann P.E."/>
            <person name="Cook L.L."/>
            <person name="Hickenbotham M.T."/>
            <person name="Eldred J."/>
            <person name="Williams D."/>
            <person name="Jones T.A."/>
            <person name="She X."/>
            <person name="Ciccarelli F.D."/>
            <person name="Izaurralde E."/>
            <person name="Taylor J."/>
            <person name="Schmutz J."/>
            <person name="Myers R.M."/>
            <person name="Cox D.R."/>
            <person name="Huang X."/>
            <person name="McPherson J.D."/>
            <person name="Mardis E.R."/>
            <person name="Clifton S.W."/>
            <person name="Warren W.C."/>
            <person name="Chinwalla A.T."/>
            <person name="Eddy S.R."/>
            <person name="Marra M.A."/>
            <person name="Ovcharenko I."/>
            <person name="Furey T.S."/>
            <person name="Miller W."/>
            <person name="Eichler E.E."/>
            <person name="Bork P."/>
            <person name="Suyama M."/>
            <person name="Torrents D."/>
            <person name="Waterston R.H."/>
            <person name="Wilson R.K."/>
        </authorList>
    </citation>
    <scope>NUCLEOTIDE SEQUENCE [LARGE SCALE GENOMIC DNA]</scope>
</reference>
<reference key="4">
    <citation type="submission" date="2005-07" db="EMBL/GenBank/DDBJ databases">
        <authorList>
            <person name="Mural R.J."/>
            <person name="Istrail S."/>
            <person name="Sutton G.G."/>
            <person name="Florea L."/>
            <person name="Halpern A.L."/>
            <person name="Mobarry C.M."/>
            <person name="Lippert R."/>
            <person name="Walenz B."/>
            <person name="Shatkay H."/>
            <person name="Dew I."/>
            <person name="Miller J.R."/>
            <person name="Flanigan M.J."/>
            <person name="Edwards N.J."/>
            <person name="Bolanos R."/>
            <person name="Fasulo D."/>
            <person name="Halldorsson B.V."/>
            <person name="Hannenhalli S."/>
            <person name="Turner R."/>
            <person name="Yooseph S."/>
            <person name="Lu F."/>
            <person name="Nusskern D.R."/>
            <person name="Shue B.C."/>
            <person name="Zheng X.H."/>
            <person name="Zhong F."/>
            <person name="Delcher A.L."/>
            <person name="Huson D.H."/>
            <person name="Kravitz S.A."/>
            <person name="Mouchard L."/>
            <person name="Reinert K."/>
            <person name="Remington K.A."/>
            <person name="Clark A.G."/>
            <person name="Waterman M.S."/>
            <person name="Eichler E.E."/>
            <person name="Adams M.D."/>
            <person name="Hunkapiller M.W."/>
            <person name="Myers E.W."/>
            <person name="Venter J.C."/>
        </authorList>
    </citation>
    <scope>NUCLEOTIDE SEQUENCE [LARGE SCALE GENOMIC DNA]</scope>
</reference>
<reference key="5">
    <citation type="submission" date="2006-07" db="EMBL/GenBank/DDBJ databases">
        <title>A Human MEPE new exon between formerly identified exon 3 and exon 4.</title>
        <authorList>
            <person name="Wang X."/>
            <person name="Wang Y."/>
        </authorList>
    </citation>
    <scope>NUCLEOTIDE SEQUENCE [MRNA] OF 10-101 (ISOFORM 2)</scope>
    <scope>ALTERNATIVE SPLICING</scope>
</reference>
<reference key="6">
    <citation type="journal article" date="2004" name="Genome Res.">
        <title>The status, quality, and expansion of the NIH full-length cDNA project: the Mammalian Gene Collection (MGC).</title>
        <authorList>
            <consortium name="The MGC Project Team"/>
        </authorList>
    </citation>
    <scope>NUCLEOTIDE SEQUENCE [LARGE SCALE MRNA] (ISOFORM 1)</scope>
</reference>
<reference key="7">
    <citation type="journal article" date="2002" name="Biochem. Biophys. Res. Commun.">
        <title>Inhibition of MEPE cleavage by Phex.</title>
        <authorList>
            <person name="Guo R."/>
            <person name="Rowe P.S."/>
            <person name="Liu S."/>
            <person name="Simpson L.G."/>
            <person name="Xiao Z.S."/>
            <person name="Quarles L.D."/>
        </authorList>
    </citation>
    <scope>PROTEOLYTIC CLEAVAGE</scope>
</reference>
<reference key="8">
    <citation type="journal article" date="2002" name="Connect. Tissue Res.">
        <title>MEPE/OF45, a new dentin/bone matrix protein and candidate gene for dentin diseases mapping to chromosome 4q21.</title>
        <authorList>
            <person name="MacDougall M."/>
            <person name="Simmons D."/>
            <person name="Gu T.T."/>
            <person name="Dong J."/>
        </authorList>
    </citation>
    <scope>TISSUE SPECIFICITY</scope>
</reference>
<reference key="9">
    <citation type="journal article" date="2004" name="Bone">
        <title>MEPE has the properties of an osteoblastic phosphatonin and minhibin.</title>
        <authorList>
            <person name="Rowe P.S."/>
            <person name="Kumagai Y."/>
            <person name="Gutierrez G."/>
            <person name="Garrett I.R."/>
            <person name="Blacher R."/>
            <person name="Rosen D."/>
            <person name="Cundy J."/>
            <person name="Navvab S."/>
            <person name="Chen D."/>
            <person name="Drezner M.K."/>
            <person name="Quarles L.D."/>
            <person name="Mundy G.R."/>
        </authorList>
    </citation>
    <scope>FUNCTION</scope>
</reference>
<reference key="10">
    <citation type="journal article" date="2004" name="J. Bone Miner. Metab.">
        <title>Matrix extracellular phosphoglycoprotein (MEPE) is highly expressed in osteocytes in human bone.</title>
        <authorList>
            <person name="Nampei A."/>
            <person name="Hashimoto J."/>
            <person name="Hayashida K."/>
            <person name="Tsuboi H."/>
            <person name="Shi K."/>
            <person name="Tsuji I."/>
            <person name="Miyashita H."/>
            <person name="Yamada T."/>
            <person name="Matsukawa N."/>
            <person name="Matsumoto M."/>
            <person name="Morimoto S."/>
            <person name="Ogihara T."/>
            <person name="Ochi T."/>
            <person name="Yoshikawa H."/>
        </authorList>
    </citation>
    <scope>SUBCELLULAR LOCATION</scope>
    <scope>TISSUE SPECIFICITY</scope>
</reference>
<reference key="11">
    <citation type="journal article" date="2004" name="J. Bone Miner. Res.">
        <title>A synthetic peptide fragment of human MEPE stimulates new bone formation in vitro and in vivo.</title>
        <authorList>
            <person name="Hayashibara T."/>
            <person name="Hiraga T."/>
            <person name="Yi B."/>
            <person name="Nomizu M."/>
            <person name="Kumagai Y."/>
            <person name="Nishimura R."/>
            <person name="Yoneda T."/>
        </authorList>
    </citation>
    <scope>DOMAIN</scope>
</reference>
<reference key="12">
    <citation type="journal article" date="2004" name="J. Dent. Res.">
        <title>Dentonin, a fragment of MEPE, enhanced dental pulp stem cell proliferation.</title>
        <authorList>
            <person name="Liu H."/>
            <person name="Li W."/>
            <person name="Gao C."/>
            <person name="Kumagai Y."/>
            <person name="Blacher R.W."/>
            <person name="DenBesten P.K."/>
        </authorList>
    </citation>
    <scope>TISSUE SPECIFICITY</scope>
    <scope>DOMAIN</scope>
</reference>
<reference key="13">
    <citation type="journal article" date="2004" name="J. Dent. Res.">
        <title>Expression of SIBLINGs and their partner MMPs in salivary glands.</title>
        <authorList>
            <person name="Ogbureke K.U."/>
            <person name="Fisher L.W."/>
        </authorList>
    </citation>
    <scope>TISSUE SPECIFICITY</scope>
</reference>
<reference key="14">
    <citation type="journal article" date="2005" name="Bone">
        <title>Surface plasmon resonance (SPR) confirms that MEPE binds to PHEX via the MEPE-ASARM motif: a model for impaired mineralization in X-linked rickets (HYP).</title>
        <authorList>
            <person name="Rowe P.S."/>
            <person name="Garrett I.R."/>
            <person name="Schwarz P.M."/>
            <person name="Carnes D.L."/>
            <person name="Lafer E.M."/>
            <person name="Mundy G.R."/>
            <person name="Gutierrez G.E."/>
        </authorList>
    </citation>
    <scope>INTERACTION WITH PHEX</scope>
    <scope>DOMAIN</scope>
</reference>
<reference key="15">
    <citation type="journal article" date="2008" name="Endocrinology">
        <title>Degradation of MEPE, DMP1, and release of SIBLING ASARM-peptides (minhibins): ASARM-peptide(s) are directly responsible for defective mineralization in HYP.</title>
        <authorList>
            <person name="Martin A."/>
            <person name="David V."/>
            <person name="Laurence J.S."/>
            <person name="Schwarz P.M."/>
            <person name="Lafer E.M."/>
            <person name="Hedge A.M."/>
            <person name="Rowe P.S."/>
        </authorList>
    </citation>
    <scope>FUNCTION</scope>
    <scope>INTERACTION WITH PHEX</scope>
    <scope>DOMAIN</scope>
</reference>
<reference key="16">
    <citation type="journal article" date="2008" name="J. Bone Miner. Res.">
        <title>MEPE-ASARM peptides control extracellular matrix mineralization by binding to hydroxyapatite: an inhibition regulated by PHEX cleavage of ASARM.</title>
        <authorList>
            <person name="Addison W.N."/>
            <person name="Nakano Y."/>
            <person name="Loisel T."/>
            <person name="Crine P."/>
            <person name="McKee M.D."/>
        </authorList>
    </citation>
    <scope>DOMAIN</scope>
</reference>
<reference key="17">
    <citation type="journal article" date="2008" name="Int. J. Immunopathol. Pharmacol.">
        <title>Changes in matrix extracellular phosphoglycoprotein expression before and during in vitro osteogenic differentiation of human dental papilla mesenchymal cells.</title>
        <authorList>
            <person name="Tete S."/>
            <person name="Nargi E."/>
            <person name="Mastrangelo F."/>
            <person name="Zizzari V."/>
            <person name="D'Apolito G."/>
            <person name="Traini T."/>
            <person name="Costanzo G."/>
            <person name="Dadorante V."/>
            <person name="D'Alimonte I."/>
            <person name="Caputi S."/>
            <person name="Caciagli F."/>
            <person name="Ciccarelli R."/>
        </authorList>
    </citation>
    <scope>TISSUE SPECIFICITY</scope>
</reference>
<reference key="18">
    <citation type="journal article" date="2008" name="J. Am. Soc. Nephrol.">
        <title>Matrix extracellular phosphoglycoprotein inhibits phosphate transport.</title>
        <authorList>
            <person name="Marks J."/>
            <person name="Churchill L.J."/>
            <person name="Debnam E.S."/>
            <person name="Unwin R.J."/>
        </authorList>
    </citation>
    <scope>FUNCTION</scope>
</reference>
<reference key="19">
    <citation type="journal article" date="2010" name="Calcif. Tissue Int.">
        <title>MEPE's diverse effects on mineralization.</title>
        <authorList>
            <person name="Boskey A.L."/>
            <person name="Chiang P."/>
            <person name="Fermanis A."/>
            <person name="Brown J."/>
            <person name="Taleb H."/>
            <person name="David V."/>
            <person name="Rowe P.S."/>
        </authorList>
    </citation>
    <scope>FUNCTION</scope>
    <scope>DOMAIN</scope>
    <scope>PHOSPHORYLATION</scope>
</reference>
<reference key="20">
    <citation type="journal article" date="2010" name="Am. J. Pathol.">
        <title>Abnormal presence of the matrix extracellular phosphoglycoprotein-derived acidic serine- and aspartate-rich motif peptide in human hypophosphatemic dentin.</title>
        <authorList>
            <person name="Boukpessi T."/>
            <person name="Gaucher C."/>
            <person name="Leger T."/>
            <person name="Salmon B."/>
            <person name="Le Faouder J."/>
            <person name="Willig C."/>
            <person name="Rowe P.S."/>
            <person name="Garabedian M."/>
            <person name="Meilhac O."/>
            <person name="Chaussain C."/>
        </authorList>
    </citation>
    <scope>FUNCTION</scope>
    <scope>TISSUE SPECIFICITY</scope>
    <scope>IDENTIFICATION BY MASS SPECTROMETRY</scope>
</reference>
<reference key="21">
    <citation type="journal article" date="2012" name="Bone">
        <title>MEPE is a novel regulator of growth plate cartilage mineralization.</title>
        <authorList>
            <person name="Staines K.A."/>
            <person name="Mackenzie N.C."/>
            <person name="Clarkin C.E."/>
            <person name="Zelenchuk L."/>
            <person name="Rowe P.S."/>
            <person name="MacRae V.E."/>
            <person name="Farquharson C."/>
        </authorList>
    </citation>
    <scope>FUNCTION</scope>
    <scope>DOMAIN</scope>
</reference>
<reference key="22">
    <citation type="journal article" date="2012" name="J. Endod.">
        <title>The effect of matrix extracellular phosphoglycoprotein and its downstream osteogenesis-related gene expression on the proliferation and differentiation of human dental pulp cells.</title>
        <authorList>
            <person name="Wei X."/>
            <person name="Liu L."/>
            <person name="Zhou X."/>
            <person name="Zhang F."/>
            <person name="Ling J."/>
        </authorList>
    </citation>
    <scope>FUNCTION</scope>
    <scope>TISSUE SPECIFICITY</scope>
</reference>
<reference key="23">
    <citation type="journal article" date="2012" name="Science">
        <title>Secreted kinase phosphorylates extracellular proteins that regulate biomineralization.</title>
        <authorList>
            <person name="Tagliabracci V.S."/>
            <person name="Engel J.L."/>
            <person name="Wen J."/>
            <person name="Wiley S.E."/>
            <person name="Worby C.A."/>
            <person name="Kinch L.N."/>
            <person name="Xiao J."/>
            <person name="Grishin N.V."/>
            <person name="Dixon J.E."/>
        </authorList>
    </citation>
    <scope>PHOSPHORYLATION BY FAM20C</scope>
</reference>
<reference key="24">
    <citation type="journal article" date="2023" name="Mol. Cell. Proteomics">
        <title>Mapping the Human Chondroitin Sulfate Glycoproteome Reveals an Unexpected Correlation Between Glycan Sulfation and Attachment Site Characteristics.</title>
        <authorList>
            <person name="Noborn F."/>
            <person name="Nilsson J."/>
            <person name="Sihlbom C."/>
            <person name="Nikpour M."/>
            <person name="Kjellen L."/>
            <person name="Larson G."/>
        </authorList>
    </citation>
    <scope>SUBCELLULAR LOCATION</scope>
    <scope>TISSUE SPECIFICITY</scope>
    <scope>GLYCOSYLATION AT SER-256</scope>
</reference>
<sequence>MRVFCVGLLLFSVTWAAPTFQPQTEKTKQSCVEEQRQEEKNKDNIGFHHLGKRINQELSSKENIVQERKKDLSLSEASENKGSSKSQNYFTNRQRLNKEYSISNKENTHNGLRMSIYPKSTGNKGFEDGDDAISKLHDQEEYGAALIRNNMQHIMGPVTAIKLLGEENKENTPRNVLNIIPASMNYAKAHSKDKKKPQRDSQAQKSPVKSKSTHRIQHNIDYLKHLSKVKKIPSDFEGSGYTDLQERGDNDISPFSGDGQPFKDIPGKGEATGPDLEGKDIQTGFAGPSEAESTHLDTKKPGYNEIPEREENGGNTIGTRDETAKEADAVDVSLVEGSNDIMGSTNFKELPGREGNRVDAGSQNAHQGKVEFHYPPAPSKEKRKEGSSDAAESTNYNEIPKNGKGSTRKGVDHSNRNQATLNEKQRFPSKGKSQGLPIPSRGLDNEIKNEMDSFNGPSHENIITHGRKYHYVPHRQNNSTRNKGMPQGKGSWGRQPHSNRRFSSRRRDDSSESSDSGSSSESDGD</sequence>
<proteinExistence type="evidence at protein level"/>